<keyword id="KW-0963">Cytoplasm</keyword>
<keyword id="KW-0378">Hydrolase</keyword>
<keyword id="KW-0460">Magnesium</keyword>
<keyword id="KW-0464">Manganese</keyword>
<keyword id="KW-0479">Metal-binding</keyword>
<keyword id="KW-0546">Nucleotide metabolism</keyword>
<keyword id="KW-0547">Nucleotide-binding</keyword>
<protein>
    <recommendedName>
        <fullName evidence="1">Inosine triphosphate pyrophosphatase</fullName>
        <shortName evidence="1">ITPase</shortName>
        <shortName evidence="1">Inosine triphosphatase</shortName>
        <ecNumber evidence="1">3.6.1.66</ecNumber>
    </recommendedName>
    <alternativeName>
        <fullName evidence="1">Non-canonical purine NTP pyrophosphatase</fullName>
    </alternativeName>
    <alternativeName>
        <fullName evidence="1">Non-standard purine NTP pyrophosphatase</fullName>
    </alternativeName>
    <alternativeName>
        <fullName evidence="1">Nucleoside-triphosphate diphosphatase</fullName>
    </alternativeName>
    <alternativeName>
        <fullName evidence="1">Nucleoside-triphosphate pyrophosphatase</fullName>
        <shortName evidence="1">NTPase</shortName>
    </alternativeName>
    <alternativeName>
        <fullName evidence="1">XTP/dITP diphosphatase</fullName>
    </alternativeName>
</protein>
<reference key="1">
    <citation type="journal article" date="2007" name="Science">
        <title>Genomic minimalism in the early diverging intestinal parasite Giardia lamblia.</title>
        <authorList>
            <person name="Morrison H.G."/>
            <person name="McArthur A.G."/>
            <person name="Gillin F.D."/>
            <person name="Aley S.B."/>
            <person name="Adam R.D."/>
            <person name="Olsen G.J."/>
            <person name="Best A.A."/>
            <person name="Cande W.Z."/>
            <person name="Chen F."/>
            <person name="Cipriano M.J."/>
            <person name="Davids B.J."/>
            <person name="Dawson S.C."/>
            <person name="Elmendorf H.G."/>
            <person name="Hehl A.B."/>
            <person name="Holder M.E."/>
            <person name="Huse S.M."/>
            <person name="Kim U.U."/>
            <person name="Lasek-Nesselquist E."/>
            <person name="Manning G."/>
            <person name="Nigam A."/>
            <person name="Nixon J.E.J."/>
            <person name="Palm D."/>
            <person name="Passamaneck N.E."/>
            <person name="Prabhu A."/>
            <person name="Reich C.I."/>
            <person name="Reiner D.S."/>
            <person name="Samuelson J."/>
            <person name="Svard S.G."/>
            <person name="Sogin M.L."/>
        </authorList>
    </citation>
    <scope>NUCLEOTIDE SEQUENCE [LARGE SCALE GENOMIC DNA]</scope>
    <source>
        <strain>ATCC 50803 / WB clone C6</strain>
    </source>
</reference>
<organism>
    <name type="scientific">Giardia intestinalis (strain ATCC 50803 / WB clone C6)</name>
    <name type="common">Giardia lamblia</name>
    <dbReference type="NCBI Taxonomy" id="184922"/>
    <lineage>
        <taxon>Eukaryota</taxon>
        <taxon>Metamonada</taxon>
        <taxon>Diplomonadida</taxon>
        <taxon>Hexamitidae</taxon>
        <taxon>Giardiinae</taxon>
        <taxon>Giardia</taxon>
    </lineage>
</organism>
<evidence type="ECO:0000255" key="1">
    <source>
        <dbReference type="HAMAP-Rule" id="MF_03148"/>
    </source>
</evidence>
<evidence type="ECO:0000305" key="2"/>
<sequence length="194" mass="20937">MAPLPLCFVTSSKKKLAEFLHAVGDNTIAHVSMDLPELQGDPETVAREKARAASRIYGGPVLVEDVSLCFNAYKGLPGVYVKSFLTAVGPSGLCNMLLPYEDKSAYALCIYAFCDVTVDDKPALFTGRADGRIVPPRGPQTFGWDCIFEPLEGGGKTYAEMEMVEKSAISHRGKALEKVKAFLTNSGVKVPCVK</sequence>
<gene>
    <name type="ORF">GL50803_7511</name>
</gene>
<name>ITPA_GIAIC</name>
<proteinExistence type="inferred from homology"/>
<accession>A8BKZ6</accession>
<comment type="function">
    <text evidence="1">Pyrophosphatase that hydrolyzes non-canonical purine nucleotides such as inosine triphosphate (ITP), deoxyinosine triphosphate (dITP) or xanthosine 5'-triphosphate (XTP) to their respective monophosphate derivatives. The enzyme does not distinguish between the deoxy- and ribose forms. Probably excludes non-canonical purines from RNA and DNA precursor pools, thus preventing their incorporation into RNA and DNA and avoiding chromosomal lesions.</text>
</comment>
<comment type="catalytic activity">
    <reaction evidence="1">
        <text>ITP + H2O = IMP + diphosphate + H(+)</text>
        <dbReference type="Rhea" id="RHEA:29399"/>
        <dbReference type="ChEBI" id="CHEBI:15377"/>
        <dbReference type="ChEBI" id="CHEBI:15378"/>
        <dbReference type="ChEBI" id="CHEBI:33019"/>
        <dbReference type="ChEBI" id="CHEBI:58053"/>
        <dbReference type="ChEBI" id="CHEBI:61402"/>
        <dbReference type="EC" id="3.6.1.66"/>
    </reaction>
    <physiologicalReaction direction="left-to-right" evidence="1">
        <dbReference type="Rhea" id="RHEA:29400"/>
    </physiologicalReaction>
</comment>
<comment type="catalytic activity">
    <reaction evidence="1">
        <text>dITP + H2O = dIMP + diphosphate + H(+)</text>
        <dbReference type="Rhea" id="RHEA:28342"/>
        <dbReference type="ChEBI" id="CHEBI:15377"/>
        <dbReference type="ChEBI" id="CHEBI:15378"/>
        <dbReference type="ChEBI" id="CHEBI:33019"/>
        <dbReference type="ChEBI" id="CHEBI:61194"/>
        <dbReference type="ChEBI" id="CHEBI:61382"/>
        <dbReference type="EC" id="3.6.1.66"/>
    </reaction>
    <physiologicalReaction direction="left-to-right" evidence="1">
        <dbReference type="Rhea" id="RHEA:28343"/>
    </physiologicalReaction>
</comment>
<comment type="catalytic activity">
    <reaction evidence="1">
        <text>XTP + H2O = XMP + diphosphate + H(+)</text>
        <dbReference type="Rhea" id="RHEA:28610"/>
        <dbReference type="ChEBI" id="CHEBI:15377"/>
        <dbReference type="ChEBI" id="CHEBI:15378"/>
        <dbReference type="ChEBI" id="CHEBI:33019"/>
        <dbReference type="ChEBI" id="CHEBI:57464"/>
        <dbReference type="ChEBI" id="CHEBI:61314"/>
        <dbReference type="EC" id="3.6.1.66"/>
    </reaction>
    <physiologicalReaction direction="left-to-right" evidence="1">
        <dbReference type="Rhea" id="RHEA:28611"/>
    </physiologicalReaction>
</comment>
<comment type="cofactor">
    <cofactor evidence="1">
        <name>Mg(2+)</name>
        <dbReference type="ChEBI" id="CHEBI:18420"/>
    </cofactor>
    <cofactor evidence="1">
        <name>Mn(2+)</name>
        <dbReference type="ChEBI" id="CHEBI:29035"/>
    </cofactor>
    <text evidence="1">Binds 1 divalent metal cation per subunit; can use either Mg(2+) or Mn(2+).</text>
</comment>
<comment type="subunit">
    <text evidence="1">Homodimer.</text>
</comment>
<comment type="subcellular location">
    <subcellularLocation>
        <location evidence="1">Cytoplasm</location>
    </subcellularLocation>
</comment>
<comment type="similarity">
    <text evidence="1">Belongs to the HAM1 NTPase family.</text>
</comment>
<comment type="sequence caution" evidence="2">
    <conflict type="erroneous initiation">
        <sequence resource="EMBL-CDS" id="EDO78712"/>
    </conflict>
    <text>Extended N-terminus.</text>
</comment>
<dbReference type="EC" id="3.6.1.66" evidence="1"/>
<dbReference type="EMBL" id="AACB02000023">
    <property type="protein sequence ID" value="EDO78712.1"/>
    <property type="status" value="ALT_INIT"/>
    <property type="molecule type" value="Genomic_DNA"/>
</dbReference>
<dbReference type="RefSeq" id="XP_001706386.1">
    <property type="nucleotide sequence ID" value="XM_001706334.1"/>
</dbReference>
<dbReference type="SMR" id="A8BKZ6"/>
<dbReference type="STRING" id="184922.A8BKZ6"/>
<dbReference type="GeneID" id="5699275"/>
<dbReference type="KEGG" id="gla:GL50803_007511"/>
<dbReference type="GO" id="GO:0005737">
    <property type="term" value="C:cytoplasm"/>
    <property type="evidence" value="ECO:0007669"/>
    <property type="project" value="UniProtKB-SubCell"/>
</dbReference>
<dbReference type="GO" id="GO:0035870">
    <property type="term" value="F:dITP diphosphatase activity"/>
    <property type="evidence" value="ECO:0007669"/>
    <property type="project" value="RHEA"/>
</dbReference>
<dbReference type="GO" id="GO:0036220">
    <property type="term" value="F:ITP diphosphatase activity"/>
    <property type="evidence" value="ECO:0007669"/>
    <property type="project" value="RHEA"/>
</dbReference>
<dbReference type="GO" id="GO:0046872">
    <property type="term" value="F:metal ion binding"/>
    <property type="evidence" value="ECO:0007669"/>
    <property type="project" value="UniProtKB-KW"/>
</dbReference>
<dbReference type="GO" id="GO:0000166">
    <property type="term" value="F:nucleotide binding"/>
    <property type="evidence" value="ECO:0007669"/>
    <property type="project" value="UniProtKB-KW"/>
</dbReference>
<dbReference type="GO" id="GO:0036222">
    <property type="term" value="F:XTP diphosphatase activity"/>
    <property type="evidence" value="ECO:0007669"/>
    <property type="project" value="RHEA"/>
</dbReference>
<dbReference type="GO" id="GO:0009204">
    <property type="term" value="P:deoxyribonucleoside triphosphate catabolic process"/>
    <property type="evidence" value="ECO:0007669"/>
    <property type="project" value="UniProtKB-UniRule"/>
</dbReference>
<dbReference type="GO" id="GO:0009117">
    <property type="term" value="P:nucleotide metabolic process"/>
    <property type="evidence" value="ECO:0007669"/>
    <property type="project" value="UniProtKB-KW"/>
</dbReference>
<dbReference type="CDD" id="cd00515">
    <property type="entry name" value="HAM1"/>
    <property type="match status" value="1"/>
</dbReference>
<dbReference type="FunFam" id="3.90.950.10:FF:000003">
    <property type="entry name" value="Inosine triphosphate pyrophosphatase"/>
    <property type="match status" value="1"/>
</dbReference>
<dbReference type="Gene3D" id="3.90.950.10">
    <property type="match status" value="1"/>
</dbReference>
<dbReference type="HAMAP" id="MF_03148">
    <property type="entry name" value="HAM1_NTPase"/>
    <property type="match status" value="1"/>
</dbReference>
<dbReference type="InterPro" id="IPR027502">
    <property type="entry name" value="ITPase"/>
</dbReference>
<dbReference type="InterPro" id="IPR029001">
    <property type="entry name" value="ITPase-like_fam"/>
</dbReference>
<dbReference type="InterPro" id="IPR002637">
    <property type="entry name" value="RdgB/HAM1"/>
</dbReference>
<dbReference type="PANTHER" id="PTHR11067:SF9">
    <property type="entry name" value="INOSINE TRIPHOSPHATE PYROPHOSPHATASE"/>
    <property type="match status" value="1"/>
</dbReference>
<dbReference type="PANTHER" id="PTHR11067">
    <property type="entry name" value="INOSINE TRIPHOSPHATE PYROPHOSPHATASE/HAM1 PROTEIN"/>
    <property type="match status" value="1"/>
</dbReference>
<dbReference type="Pfam" id="PF01725">
    <property type="entry name" value="Ham1p_like"/>
    <property type="match status" value="1"/>
</dbReference>
<dbReference type="SUPFAM" id="SSF52972">
    <property type="entry name" value="ITPase-like"/>
    <property type="match status" value="1"/>
</dbReference>
<feature type="chain" id="PRO_0000413153" description="Inosine triphosphate pyrophosphatase">
    <location>
        <begin position="1"/>
        <end position="194"/>
    </location>
</feature>
<feature type="binding site" evidence="1">
    <location>
        <begin position="10"/>
        <end position="15"/>
    </location>
    <ligand>
        <name>ITP</name>
        <dbReference type="ChEBI" id="CHEBI:61402"/>
    </ligand>
</feature>
<feature type="binding site" evidence="1">
    <location>
        <position position="37"/>
    </location>
    <ligand>
        <name>Mg(2+)</name>
        <dbReference type="ChEBI" id="CHEBI:18420"/>
    </ligand>
</feature>
<feature type="binding site" evidence="1">
    <location>
        <position position="49"/>
    </location>
    <ligand>
        <name>ITP</name>
        <dbReference type="ChEBI" id="CHEBI:61402"/>
    </ligand>
</feature>
<feature type="binding site" evidence="1">
    <location>
        <begin position="65"/>
        <end position="66"/>
    </location>
    <ligand>
        <name>ITP</name>
        <dbReference type="ChEBI" id="CHEBI:61402"/>
    </ligand>
</feature>
<feature type="binding site" evidence="1">
    <location>
        <position position="82"/>
    </location>
    <ligand>
        <name>ITP</name>
        <dbReference type="ChEBI" id="CHEBI:61402"/>
    </ligand>
</feature>
<feature type="binding site" evidence="1">
    <location>
        <begin position="142"/>
        <end position="145"/>
    </location>
    <ligand>
        <name>ITP</name>
        <dbReference type="ChEBI" id="CHEBI:61402"/>
    </ligand>
</feature>
<feature type="binding site" evidence="1">
    <location>
        <position position="166"/>
    </location>
    <ligand>
        <name>ITP</name>
        <dbReference type="ChEBI" id="CHEBI:61402"/>
    </ligand>
</feature>
<feature type="binding site" evidence="1">
    <location>
        <begin position="171"/>
        <end position="172"/>
    </location>
    <ligand>
        <name>ITP</name>
        <dbReference type="ChEBI" id="CHEBI:61402"/>
    </ligand>
</feature>